<accession>A0A075B6T8</accession>
<protein>
    <recommendedName>
        <fullName evidence="8">T cell receptor alpha variable 9-1</fullName>
    </recommendedName>
</protein>
<keyword id="KW-1064">Adaptive immunity</keyword>
<keyword id="KW-1003">Cell membrane</keyword>
<keyword id="KW-1015">Disulfide bond</keyword>
<keyword id="KW-0325">Glycoprotein</keyword>
<keyword id="KW-0391">Immunity</keyword>
<keyword id="KW-0393">Immunoglobulin domain</keyword>
<keyword id="KW-0472">Membrane</keyword>
<keyword id="KW-0675">Receptor</keyword>
<keyword id="KW-1185">Reference proteome</keyword>
<keyword id="KW-0732">Signal</keyword>
<keyword id="KW-1279">T cell receptor</keyword>
<evidence type="ECO:0000255" key="1"/>
<evidence type="ECO:0000255" key="2">
    <source>
        <dbReference type="PROSITE-ProRule" id="PRU00114"/>
    </source>
</evidence>
<evidence type="ECO:0000303" key="3">
    <source>
    </source>
</evidence>
<evidence type="ECO:0000303" key="4">
    <source>
    </source>
</evidence>
<evidence type="ECO:0000303" key="5">
    <source>
    </source>
</evidence>
<evidence type="ECO:0000303" key="6">
    <source>
    </source>
</evidence>
<evidence type="ECO:0000303" key="7">
    <source>
    </source>
</evidence>
<evidence type="ECO:0000303" key="8">
    <source ref="2"/>
</evidence>
<evidence type="ECO:0000305" key="9"/>
<proteinExistence type="inferred from homology"/>
<gene>
    <name evidence="8" type="primary">TRAV9-1</name>
</gene>
<organism>
    <name type="scientific">Homo sapiens</name>
    <name type="common">Human</name>
    <dbReference type="NCBI Taxonomy" id="9606"/>
    <lineage>
        <taxon>Eukaryota</taxon>
        <taxon>Metazoa</taxon>
        <taxon>Chordata</taxon>
        <taxon>Craniata</taxon>
        <taxon>Vertebrata</taxon>
        <taxon>Euteleostomi</taxon>
        <taxon>Mammalia</taxon>
        <taxon>Eutheria</taxon>
        <taxon>Euarchontoglires</taxon>
        <taxon>Primates</taxon>
        <taxon>Haplorrhini</taxon>
        <taxon>Catarrhini</taxon>
        <taxon>Hominidae</taxon>
        <taxon>Homo</taxon>
    </lineage>
</organism>
<feature type="signal peptide" evidence="1">
    <location>
        <begin position="1"/>
        <end position="20"/>
    </location>
</feature>
<feature type="chain" id="PRO_0000443261" description="T cell receptor alpha variable 9-1" evidence="1">
    <location>
        <begin position="21"/>
        <end position="112"/>
    </location>
</feature>
<feature type="domain" description="Ig-like" evidence="2">
    <location>
        <begin position="21"/>
        <end position="112" status="greater than"/>
    </location>
</feature>
<feature type="glycosylation site" description="N-linked (GlcNAc...) asparagine" evidence="1">
    <location>
        <position position="41"/>
    </location>
</feature>
<feature type="disulfide bond" evidence="2">
    <location>
        <begin position="42"/>
        <end position="109"/>
    </location>
</feature>
<feature type="non-terminal residue">
    <location>
        <position position="112"/>
    </location>
</feature>
<sequence>MNSSPGPAIALFLMFGGINGDSVVQTEGQVLPSEGDSLIVNCSYETTQYPSLFWYVQYPGEGPQLHLKAMKANDKGRNKGFEAMYRKETTSFHLEKDSVQESDSAVYFCALS</sequence>
<comment type="function">
    <text evidence="3 5 6 7">V region of the variable domain of T cell receptor (TR) alpha chain that participates in the antigen recognition (PubMed:24600447). Alpha-beta T cell receptors are antigen specific receptors which are essential to the immune response and are present on the cell surface of T lymphocytes. Recognize peptide-major histocompatibility (MH) (pMH) complexes that are displayed by antigen presenting cells (APC), a prerequisite for efficient T cell adaptive immunity against pathogens (PubMed:25493333). Binding of alpha-beta TR to pMH complex initiates TR-CD3 clustering on the cell surface and intracellular activation of LCK that phosphorylates the ITAM motifs of CD3G, CD3D, CD3E and CD247 enabling the recruitment of ZAP70. In turn ZAP70 phosphorylates LAT, which recruits numerous signaling molecules to form the LAT signalosome. The LAT signalosome propagates signal branching to three major signaling pathways, the calcium, the mitogen-activated protein kinase (MAPK) kinase and the nuclear factor NF-kappa-B (NF-kB) pathways, leading to the mobilization of transcription factors that are critical for gene expression and essential for T cell growth and differentiation (PubMed:23524462). The T cell repertoire is generated in the thymus, by V-(D)-J rearrangement. This repertoire is then shaped by intrathymic selection events to generate a peripheral T cell pool of self-MH restricted, non-autoaggressive T cells. Post-thymic interaction of alpha-beta TR with the pMH complexes shapes TR structural and functional avidity (PubMed:15040585).</text>
</comment>
<comment type="subunit">
    <text evidence="4">Alpha-beta TR is a heterodimer composed of an alpha and beta chain; disulfide-linked. The alpha-beta TR is associated with the transmembrane signaling CD3 coreceptor proteins to form the TR-CD3 (TcR or TCR). The assembly of alpha-beta TR heterodimers with CD3 occurs in the endoplasmic reticulum where a single alpha-beta TR heterodimer associates with one CD3D-CD3E heterodimer, one CD3G-CD3E heterodimer and one CD247 homodimer forming a stable octameric structure. CD3D-CD3E and CD3G-CD3E heterodimers preferentially associate with TR alpha and TR beta chains, respectively. The association of the CD247 homodimer is the last step of TcR assembly in the endoplasmic reticulum and is required for transport to the cell surface.</text>
</comment>
<comment type="subcellular location">
    <subcellularLocation>
        <location evidence="4">Cell membrane</location>
    </subcellularLocation>
</comment>
<comment type="polymorphism">
    <text evidence="9">There are several alleles. The sequence shown is that of IMGT allele TRAV9-1*01.</text>
</comment>
<reference key="1">
    <citation type="journal article" date="2003" name="Nature">
        <title>The DNA sequence and analysis of human chromosome 14.</title>
        <authorList>
            <person name="Heilig R."/>
            <person name="Eckenberg R."/>
            <person name="Petit J.-L."/>
            <person name="Fonknechten N."/>
            <person name="Da Silva C."/>
            <person name="Cattolico L."/>
            <person name="Levy M."/>
            <person name="Barbe V."/>
            <person name="De Berardinis V."/>
            <person name="Ureta-Vidal A."/>
            <person name="Pelletier E."/>
            <person name="Vico V."/>
            <person name="Anthouard V."/>
            <person name="Rowen L."/>
            <person name="Madan A."/>
            <person name="Qin S."/>
            <person name="Sun H."/>
            <person name="Du H."/>
            <person name="Pepin K."/>
            <person name="Artiguenave F."/>
            <person name="Robert C."/>
            <person name="Cruaud C."/>
            <person name="Bruels T."/>
            <person name="Jaillon O."/>
            <person name="Friedlander L."/>
            <person name="Samson G."/>
            <person name="Brottier P."/>
            <person name="Cure S."/>
            <person name="Segurens B."/>
            <person name="Aniere F."/>
            <person name="Samain S."/>
            <person name="Crespeau H."/>
            <person name="Abbasi N."/>
            <person name="Aiach N."/>
            <person name="Boscus D."/>
            <person name="Dickhoff R."/>
            <person name="Dors M."/>
            <person name="Dubois I."/>
            <person name="Friedman C."/>
            <person name="Gouyvenoux M."/>
            <person name="James R."/>
            <person name="Madan A."/>
            <person name="Mairey-Estrada B."/>
            <person name="Mangenot S."/>
            <person name="Martins N."/>
            <person name="Menard M."/>
            <person name="Oztas S."/>
            <person name="Ratcliffe A."/>
            <person name="Shaffer T."/>
            <person name="Trask B."/>
            <person name="Vacherie B."/>
            <person name="Bellemere C."/>
            <person name="Belser C."/>
            <person name="Besnard-Gonnet M."/>
            <person name="Bartol-Mavel D."/>
            <person name="Boutard M."/>
            <person name="Briez-Silla S."/>
            <person name="Combette S."/>
            <person name="Dufosse-Laurent V."/>
            <person name="Ferron C."/>
            <person name="Lechaplais C."/>
            <person name="Louesse C."/>
            <person name="Muselet D."/>
            <person name="Magdelenat G."/>
            <person name="Pateau E."/>
            <person name="Petit E."/>
            <person name="Sirvain-Trukniewicz P."/>
            <person name="Trybou A."/>
            <person name="Vega-Czarny N."/>
            <person name="Bataille E."/>
            <person name="Bluet E."/>
            <person name="Bordelais I."/>
            <person name="Dubois M."/>
            <person name="Dumont C."/>
            <person name="Guerin T."/>
            <person name="Haffray S."/>
            <person name="Hammadi R."/>
            <person name="Muanga J."/>
            <person name="Pellouin V."/>
            <person name="Robert D."/>
            <person name="Wunderle E."/>
            <person name="Gauguet G."/>
            <person name="Roy A."/>
            <person name="Sainte-Marthe L."/>
            <person name="Verdier J."/>
            <person name="Verdier-Discala C."/>
            <person name="Hillier L.W."/>
            <person name="Fulton L."/>
            <person name="McPherson J."/>
            <person name="Matsuda F."/>
            <person name="Wilson R."/>
            <person name="Scarpelli C."/>
            <person name="Gyapay G."/>
            <person name="Wincker P."/>
            <person name="Saurin W."/>
            <person name="Quetier F."/>
            <person name="Waterston R."/>
            <person name="Hood L."/>
            <person name="Weissenbach J."/>
        </authorList>
    </citation>
    <scope>NUCLEOTIDE SEQUENCE [LARGE SCALE GENOMIC DNA] (IMGT ALLELE TRAV9-1*01)</scope>
</reference>
<reference key="2">
    <citation type="book" date="2001" name="The T Cell Receptor FactsBook.">
        <title>The T Cell Receptor FactsBook.</title>
        <editorList>
            <person name="Lefranc M.P."/>
            <person name="Lefranc G."/>
        </editorList>
        <authorList>
            <person name="Lefranc M.P."/>
            <person name="Lefranc G."/>
        </authorList>
    </citation>
    <scope>NOMENCLATURE</scope>
</reference>
<reference key="3">
    <citation type="journal article" date="2004" name="Nat. Rev. Immunol.">
        <title>The many important facets of T-cell repertoire diversity.</title>
        <authorList>
            <person name="Nikolich-Zugich J."/>
            <person name="Slifka M.K."/>
            <person name="Messaoudi I."/>
        </authorList>
    </citation>
    <scope>REVIEW ON T CELL REPERTOIRE DIVERSITY</scope>
</reference>
<reference key="4">
    <citation type="journal article" date="2010" name="Cold Spring Harb. Perspect. Biol.">
        <title>Structural biology of the T-cell receptor: insights into receptor assembly, ligand recognition, and initiation of signaling.</title>
        <authorList>
            <person name="Wucherpfennig K.W."/>
            <person name="Gagnon E."/>
            <person name="Call M.J."/>
            <person name="Huseby E.S."/>
            <person name="Call M.E."/>
        </authorList>
    </citation>
    <scope>REVIEW ON T CELL RECEPTOR-CD3 COMPLEX ASSEMBLY</scope>
    <scope>SUBCELLULAR LOCATION</scope>
</reference>
<reference key="5">
    <citation type="journal article" date="2013" name="Nat. Rev. Immunol.">
        <title>T cell receptor signalling networks: branched, diversified and bounded.</title>
        <authorList>
            <person name="Brownlie R.J."/>
            <person name="Zamoyska R."/>
        </authorList>
    </citation>
    <scope>REVIEW ON T CELL RECEPTOR SIGNALING</scope>
</reference>
<reference key="6">
    <citation type="journal article" date="2014" name="Front. Immunol.">
        <title>Immunoglobulin and T Cell Receptor Genes: IMGT((R)) and the Birth and Rise of Immunoinformatics.</title>
        <authorList>
            <person name="Lefranc M.P."/>
        </authorList>
    </citation>
    <scope>NOMENCLATURE</scope>
</reference>
<reference key="7">
    <citation type="journal article" date="2015" name="Annu. Rev. Immunol.">
        <title>T cell antigen receptor recognition of antigen-presenting molecules.</title>
        <authorList>
            <person name="Rossjohn J."/>
            <person name="Gras S."/>
            <person name="Miles J.J."/>
            <person name="Turner S.J."/>
            <person name="Godfrey D.I."/>
            <person name="McCluskey J."/>
        </authorList>
    </citation>
    <scope>REVIEW ON FUNCTION</scope>
</reference>
<dbReference type="EMBL" id="AC243980">
    <property type="status" value="NOT_ANNOTATED_CDS"/>
    <property type="molecule type" value="Genomic_DNA"/>
</dbReference>
<dbReference type="SMR" id="A0A075B6T8"/>
<dbReference type="FunCoup" id="A0A075B6T8">
    <property type="interactions" value="316"/>
</dbReference>
<dbReference type="IMGT_GENE-DB" id="TRAV9-1"/>
<dbReference type="GlyCosmos" id="A0A075B6T8">
    <property type="glycosylation" value="1 site, No reported glycans"/>
</dbReference>
<dbReference type="GlyGen" id="A0A075B6T8">
    <property type="glycosylation" value="1 site"/>
</dbReference>
<dbReference type="BioMuta" id="TRAV9-1"/>
<dbReference type="Ensembl" id="ENST00000390431.3">
    <property type="protein sequence ID" value="ENSP00000438446.1"/>
    <property type="gene ID" value="ENSG00000211783.3"/>
</dbReference>
<dbReference type="UCSC" id="uc001wbv.4">
    <property type="organism name" value="human"/>
</dbReference>
<dbReference type="AGR" id="HGNC:12153"/>
<dbReference type="GeneCards" id="TRAV9-1"/>
<dbReference type="HGNC" id="HGNC:12153">
    <property type="gene designation" value="TRAV9-1"/>
</dbReference>
<dbReference type="HPA" id="ENSG00000211783">
    <property type="expression patterns" value="Not detected"/>
</dbReference>
<dbReference type="neXtProt" id="NX_A0A075B6T8"/>
<dbReference type="VEuPathDB" id="HostDB:ENSG00000211783"/>
<dbReference type="GeneTree" id="ENSGT00940000154455"/>
<dbReference type="HOGENOM" id="CLU_077975_8_0_1"/>
<dbReference type="InParanoid" id="A0A075B6T8"/>
<dbReference type="OMA" id="MMANDKE"/>
<dbReference type="OrthoDB" id="8947657at2759"/>
<dbReference type="PAN-GO" id="A0A075B6T8">
    <property type="GO annotations" value="3 GO annotations based on evolutionary models"/>
</dbReference>
<dbReference type="PhylomeDB" id="A0A075B6T8"/>
<dbReference type="Pharos" id="A0A075B6T8">
    <property type="development level" value="Tdark"/>
</dbReference>
<dbReference type="PRO" id="PR:A0A075B6T8"/>
<dbReference type="Proteomes" id="UP000005640">
    <property type="component" value="Chromosome 14"/>
</dbReference>
<dbReference type="RNAct" id="A0A075B6T8">
    <property type="molecule type" value="protein"/>
</dbReference>
<dbReference type="Bgee" id="ENSG00000211783">
    <property type="expression patterns" value="Expressed in blood and 9 other cell types or tissues"/>
</dbReference>
<dbReference type="GO" id="GO:0042101">
    <property type="term" value="C:T cell receptor complex"/>
    <property type="evidence" value="ECO:0007669"/>
    <property type="project" value="UniProtKB-KW"/>
</dbReference>
<dbReference type="GO" id="GO:0002250">
    <property type="term" value="P:adaptive immune response"/>
    <property type="evidence" value="ECO:0007669"/>
    <property type="project" value="UniProtKB-KW"/>
</dbReference>
<dbReference type="Gene3D" id="2.60.40.10">
    <property type="entry name" value="Immunoglobulins"/>
    <property type="match status" value="1"/>
</dbReference>
<dbReference type="InterPro" id="IPR007110">
    <property type="entry name" value="Ig-like_dom"/>
</dbReference>
<dbReference type="InterPro" id="IPR036179">
    <property type="entry name" value="Ig-like_dom_sf"/>
</dbReference>
<dbReference type="InterPro" id="IPR013783">
    <property type="entry name" value="Ig-like_fold"/>
</dbReference>
<dbReference type="InterPro" id="IPR013106">
    <property type="entry name" value="Ig_V-set"/>
</dbReference>
<dbReference type="InterPro" id="IPR051287">
    <property type="entry name" value="TCR_variable_region"/>
</dbReference>
<dbReference type="PANTHER" id="PTHR19367:SF36">
    <property type="entry name" value="T CELL RECEPTOR ALPHA VARIABLE 9-1"/>
    <property type="match status" value="1"/>
</dbReference>
<dbReference type="PANTHER" id="PTHR19367">
    <property type="entry name" value="T-CELL RECEPTOR ALPHA CHAIN V REGION"/>
    <property type="match status" value="1"/>
</dbReference>
<dbReference type="Pfam" id="PF07686">
    <property type="entry name" value="V-set"/>
    <property type="match status" value="1"/>
</dbReference>
<dbReference type="SUPFAM" id="SSF48726">
    <property type="entry name" value="Immunoglobulin"/>
    <property type="match status" value="1"/>
</dbReference>
<dbReference type="PROSITE" id="PS50835">
    <property type="entry name" value="IG_LIKE"/>
    <property type="match status" value="1"/>
</dbReference>
<name>TVA91_HUMAN</name>